<dbReference type="EC" id="6.1.1.19" evidence="1"/>
<dbReference type="EMBL" id="CP000909">
    <property type="protein sequence ID" value="ABY35239.1"/>
    <property type="molecule type" value="Genomic_DNA"/>
</dbReference>
<dbReference type="RefSeq" id="WP_012257893.1">
    <property type="nucleotide sequence ID" value="NC_010175.1"/>
</dbReference>
<dbReference type="RefSeq" id="YP_001635628.1">
    <property type="nucleotide sequence ID" value="NC_010175.1"/>
</dbReference>
<dbReference type="SMR" id="A9WEH7"/>
<dbReference type="FunCoup" id="A9WEH7">
    <property type="interactions" value="469"/>
</dbReference>
<dbReference type="STRING" id="324602.Caur_2024"/>
<dbReference type="EnsemblBacteria" id="ABY35239">
    <property type="protein sequence ID" value="ABY35239"/>
    <property type="gene ID" value="Caur_2024"/>
</dbReference>
<dbReference type="KEGG" id="cau:Caur_2024"/>
<dbReference type="PATRIC" id="fig|324602.8.peg.2300"/>
<dbReference type="eggNOG" id="COG0018">
    <property type="taxonomic scope" value="Bacteria"/>
</dbReference>
<dbReference type="HOGENOM" id="CLU_006406_5_1_0"/>
<dbReference type="InParanoid" id="A9WEH7"/>
<dbReference type="Proteomes" id="UP000002008">
    <property type="component" value="Chromosome"/>
</dbReference>
<dbReference type="GO" id="GO:0005737">
    <property type="term" value="C:cytoplasm"/>
    <property type="evidence" value="ECO:0007669"/>
    <property type="project" value="UniProtKB-SubCell"/>
</dbReference>
<dbReference type="GO" id="GO:0004814">
    <property type="term" value="F:arginine-tRNA ligase activity"/>
    <property type="evidence" value="ECO:0000318"/>
    <property type="project" value="GO_Central"/>
</dbReference>
<dbReference type="GO" id="GO:0005524">
    <property type="term" value="F:ATP binding"/>
    <property type="evidence" value="ECO:0007669"/>
    <property type="project" value="UniProtKB-UniRule"/>
</dbReference>
<dbReference type="GO" id="GO:0006420">
    <property type="term" value="P:arginyl-tRNA aminoacylation"/>
    <property type="evidence" value="ECO:0000318"/>
    <property type="project" value="GO_Central"/>
</dbReference>
<dbReference type="CDD" id="cd07956">
    <property type="entry name" value="Anticodon_Ia_Arg"/>
    <property type="match status" value="1"/>
</dbReference>
<dbReference type="CDD" id="cd00671">
    <property type="entry name" value="ArgRS_core"/>
    <property type="match status" value="1"/>
</dbReference>
<dbReference type="FunFam" id="1.10.730.10:FF:000109">
    <property type="entry name" value="Arginine--tRNA ligase"/>
    <property type="match status" value="1"/>
</dbReference>
<dbReference type="FunFam" id="3.40.50.620:FF:000116">
    <property type="entry name" value="Arginine--tRNA ligase"/>
    <property type="match status" value="1"/>
</dbReference>
<dbReference type="Gene3D" id="3.30.1360.70">
    <property type="entry name" value="Arginyl tRNA synthetase N-terminal domain"/>
    <property type="match status" value="1"/>
</dbReference>
<dbReference type="Gene3D" id="3.40.50.620">
    <property type="entry name" value="HUPs"/>
    <property type="match status" value="1"/>
</dbReference>
<dbReference type="Gene3D" id="1.10.730.10">
    <property type="entry name" value="Isoleucyl-tRNA Synthetase, Domain 1"/>
    <property type="match status" value="1"/>
</dbReference>
<dbReference type="HAMAP" id="MF_00123">
    <property type="entry name" value="Arg_tRNA_synth"/>
    <property type="match status" value="1"/>
</dbReference>
<dbReference type="InterPro" id="IPR001412">
    <property type="entry name" value="aa-tRNA-synth_I_CS"/>
</dbReference>
<dbReference type="InterPro" id="IPR001278">
    <property type="entry name" value="Arg-tRNA-ligase"/>
</dbReference>
<dbReference type="InterPro" id="IPR005148">
    <property type="entry name" value="Arg-tRNA-synth_N"/>
</dbReference>
<dbReference type="InterPro" id="IPR036695">
    <property type="entry name" value="Arg-tRNA-synth_N_sf"/>
</dbReference>
<dbReference type="InterPro" id="IPR035684">
    <property type="entry name" value="ArgRS_core"/>
</dbReference>
<dbReference type="InterPro" id="IPR008909">
    <property type="entry name" value="DALR_anticod-bd"/>
</dbReference>
<dbReference type="InterPro" id="IPR014729">
    <property type="entry name" value="Rossmann-like_a/b/a_fold"/>
</dbReference>
<dbReference type="InterPro" id="IPR009080">
    <property type="entry name" value="tRNAsynth_Ia_anticodon-bd"/>
</dbReference>
<dbReference type="NCBIfam" id="TIGR00456">
    <property type="entry name" value="argS"/>
    <property type="match status" value="1"/>
</dbReference>
<dbReference type="PANTHER" id="PTHR11956:SF5">
    <property type="entry name" value="ARGININE--TRNA LIGASE, CYTOPLASMIC"/>
    <property type="match status" value="1"/>
</dbReference>
<dbReference type="PANTHER" id="PTHR11956">
    <property type="entry name" value="ARGINYL-TRNA SYNTHETASE"/>
    <property type="match status" value="1"/>
</dbReference>
<dbReference type="Pfam" id="PF03485">
    <property type="entry name" value="Arg_tRNA_synt_N"/>
    <property type="match status" value="1"/>
</dbReference>
<dbReference type="Pfam" id="PF05746">
    <property type="entry name" value="DALR_1"/>
    <property type="match status" value="1"/>
</dbReference>
<dbReference type="Pfam" id="PF00750">
    <property type="entry name" value="tRNA-synt_1d"/>
    <property type="match status" value="1"/>
</dbReference>
<dbReference type="PRINTS" id="PR01038">
    <property type="entry name" value="TRNASYNTHARG"/>
</dbReference>
<dbReference type="SMART" id="SM01016">
    <property type="entry name" value="Arg_tRNA_synt_N"/>
    <property type="match status" value="1"/>
</dbReference>
<dbReference type="SMART" id="SM00836">
    <property type="entry name" value="DALR_1"/>
    <property type="match status" value="1"/>
</dbReference>
<dbReference type="SUPFAM" id="SSF47323">
    <property type="entry name" value="Anticodon-binding domain of a subclass of class I aminoacyl-tRNA synthetases"/>
    <property type="match status" value="1"/>
</dbReference>
<dbReference type="SUPFAM" id="SSF55190">
    <property type="entry name" value="Arginyl-tRNA synthetase (ArgRS), N-terminal 'additional' domain"/>
    <property type="match status" value="1"/>
</dbReference>
<dbReference type="SUPFAM" id="SSF52374">
    <property type="entry name" value="Nucleotidylyl transferase"/>
    <property type="match status" value="1"/>
</dbReference>
<dbReference type="PROSITE" id="PS00178">
    <property type="entry name" value="AA_TRNA_LIGASE_I"/>
    <property type="match status" value="1"/>
</dbReference>
<keyword id="KW-0030">Aminoacyl-tRNA synthetase</keyword>
<keyword id="KW-0067">ATP-binding</keyword>
<keyword id="KW-0963">Cytoplasm</keyword>
<keyword id="KW-0436">Ligase</keyword>
<keyword id="KW-0547">Nucleotide-binding</keyword>
<keyword id="KW-0648">Protein biosynthesis</keyword>
<keyword id="KW-1185">Reference proteome</keyword>
<reference key="1">
    <citation type="journal article" date="2011" name="BMC Genomics">
        <title>Complete genome sequence of the filamentous anoxygenic phototrophic bacterium Chloroflexus aurantiacus.</title>
        <authorList>
            <person name="Tang K.H."/>
            <person name="Barry K."/>
            <person name="Chertkov O."/>
            <person name="Dalin E."/>
            <person name="Han C.S."/>
            <person name="Hauser L.J."/>
            <person name="Honchak B.M."/>
            <person name="Karbach L.E."/>
            <person name="Land M.L."/>
            <person name="Lapidus A."/>
            <person name="Larimer F.W."/>
            <person name="Mikhailova N."/>
            <person name="Pitluck S."/>
            <person name="Pierson B.K."/>
            <person name="Blankenship R.E."/>
        </authorList>
    </citation>
    <scope>NUCLEOTIDE SEQUENCE [LARGE SCALE GENOMIC DNA]</scope>
    <source>
        <strain>ATCC 29366 / DSM 635 / J-10-fl</strain>
    </source>
</reference>
<feature type="chain" id="PRO_1000095347" description="Arginine--tRNA ligase">
    <location>
        <begin position="1"/>
        <end position="574"/>
    </location>
</feature>
<feature type="short sequence motif" description="'HIGH' region">
    <location>
        <begin position="126"/>
        <end position="136"/>
    </location>
</feature>
<evidence type="ECO:0000255" key="1">
    <source>
        <dbReference type="HAMAP-Rule" id="MF_00123"/>
    </source>
</evidence>
<gene>
    <name evidence="1" type="primary">argS</name>
    <name type="ordered locus">Caur_2024</name>
</gene>
<protein>
    <recommendedName>
        <fullName evidence="1">Arginine--tRNA ligase</fullName>
        <ecNumber evidence="1">6.1.1.19</ecNumber>
    </recommendedName>
    <alternativeName>
        <fullName evidence="1">Arginyl-tRNA synthetase</fullName>
        <shortName evidence="1">ArgRS</shortName>
    </alternativeName>
</protein>
<comment type="catalytic activity">
    <reaction evidence="1">
        <text>tRNA(Arg) + L-arginine + ATP = L-arginyl-tRNA(Arg) + AMP + diphosphate</text>
        <dbReference type="Rhea" id="RHEA:20301"/>
        <dbReference type="Rhea" id="RHEA-COMP:9658"/>
        <dbReference type="Rhea" id="RHEA-COMP:9673"/>
        <dbReference type="ChEBI" id="CHEBI:30616"/>
        <dbReference type="ChEBI" id="CHEBI:32682"/>
        <dbReference type="ChEBI" id="CHEBI:33019"/>
        <dbReference type="ChEBI" id="CHEBI:78442"/>
        <dbReference type="ChEBI" id="CHEBI:78513"/>
        <dbReference type="ChEBI" id="CHEBI:456215"/>
        <dbReference type="EC" id="6.1.1.19"/>
    </reaction>
</comment>
<comment type="subunit">
    <text evidence="1">Monomer.</text>
</comment>
<comment type="subcellular location">
    <subcellularLocation>
        <location evidence="1">Cytoplasm</location>
    </subcellularLocation>
</comment>
<comment type="similarity">
    <text evidence="1">Belongs to the class-I aminoacyl-tRNA synthetase family.</text>
</comment>
<organism>
    <name type="scientific">Chloroflexus aurantiacus (strain ATCC 29366 / DSM 635 / J-10-fl)</name>
    <dbReference type="NCBI Taxonomy" id="324602"/>
    <lineage>
        <taxon>Bacteria</taxon>
        <taxon>Bacillati</taxon>
        <taxon>Chloroflexota</taxon>
        <taxon>Chloroflexia</taxon>
        <taxon>Chloroflexales</taxon>
        <taxon>Chloroflexineae</taxon>
        <taxon>Chloroflexaceae</taxon>
        <taxon>Chloroflexus</taxon>
    </lineage>
</organism>
<name>SYR_CHLAA</name>
<sequence length="574" mass="63529">MRYALERFISDIQAAIVATGKVPADLIEITTPKPNIPADRTFVTFKAAKALGVDPVRLAADLATAIVPPPDSLIGEVTATGAFLNFTLHPQRLAAAVMAEIETYGDAYGSVADGANRTVVIDYSSPNIAKRMHVGHIRSTIIGQALVHIFRALGYRVIGDNHLGDWGTQFGIILAAMQRYGRPQNEGEAAMAELEALYARYNAEMKDNPPLEDEARRWSLALEQGDPTARELWQWCVDLTMRAAQRNYDRLGVRFDYAYGESFYEAMLPGVIEEALQSGAAFRDVDGAVVAELDKLPRFIVQRSDGGTVYITRDIATIKFRLQEFNPSHIIYVVDARQELHFRQLFAIVRAMGYALDVELIHVPFGVITTPDGQPLSTKKGNMVYLESLLDDAVARARALVDAKSPTLSPEERAQIAEAVGIGAVIYNDLYQDPRRNITLDWDRMLSIEGNSAAYLQYSHARCRSILRRAAEEGMLSTEVDPGLLTHPSEQRLVRHLARLPEAVREAGARYAPFVIADWCYTTAREFGIFFEQCPVLRAETPALRAARLQLVSATANALRNGLALLGIQAPERM</sequence>
<proteinExistence type="inferred from homology"/>
<accession>A9WEH7</accession>